<gene>
    <name evidence="2" type="primary">cry19Ba</name>
    <name type="synonym">cryXIXB(a)</name>
</gene>
<geneLocation type="plasmid"/>
<reference key="1">
    <citation type="journal article" date="1998" name="Syst. Appl. Microbiol.">
        <title>A novel class of mosquitocidal delta-endotoxin, Cry19B, encoded by a Bacillus thuringiensis serovar higo gene.</title>
        <authorList>
            <person name="Hwang S.H."/>
            <person name="Saitoh H."/>
            <person name="Mizuki E."/>
            <person name="Higuchi K."/>
            <person name="Ohba M."/>
        </authorList>
    </citation>
    <scope>NUCLEOTIDE SEQUENCE [GENOMIC DNA]</scope>
    <scope>FUNCTION</scope>
</reference>
<organism>
    <name type="scientific">Bacillus thuringiensis subsp. higo</name>
    <dbReference type="NCBI Taxonomy" id="132266"/>
    <lineage>
        <taxon>Bacteria</taxon>
        <taxon>Bacillati</taxon>
        <taxon>Bacillota</taxon>
        <taxon>Bacilli</taxon>
        <taxon>Bacillales</taxon>
        <taxon>Bacillaceae</taxon>
        <taxon>Bacillus</taxon>
        <taxon>Bacillus cereus group</taxon>
    </lineage>
</organism>
<proteinExistence type="evidence at transcript level"/>
<comment type="function">
    <text evidence="1">Promotes colloidosmotic lysis by binding to the midgut epithelial cells of mosquitos (Probable). Has larvicidal activity against Culex pipiens molestus, but not to Anopheles stephensi.</text>
</comment>
<comment type="developmental stage">
    <text>The crystal protein is produced during sporulation and is accumulated both as an inclusion and as part of the spore coat.</text>
</comment>
<comment type="miscellaneous">
    <text>Toxic segment of the protein is located in the N-terminus.</text>
</comment>
<comment type="miscellaneous">
    <text evidence="4">Encoded on an unnamed 110 kb plasmid.</text>
</comment>
<comment type="similarity">
    <text evidence="3">Belongs to the delta endotoxin family.</text>
</comment>
<accession>O86170</accession>
<sequence>MNSYQNKNEYEILDAKRNTCHMSNCYPKYPLANDPQMYLRNTHYKDWINMCEEASYASSGPSQLFKVGGSIVAKILGMIPEVGPLLSWMVSLFWPTIEEKNTVWEDMIKYVANLLKQELTNDTLNRATSNLSGLNESLNIYNRALAAWKQNKNNFASGELIRSYINDLHILFTRDIQSDFSLGGYETVLLPSYASAANLHLLLLRDVAIYGKELGYPSTDVEFYYNEQKYYTEKYSNYCVNTYKSGLESKKQIGWSDFNRYRREMTLSVLDIVALFPLYDTGLYPSKDGKIHVKAELTREIYSDVINDHVYGLMVPYISFEHAESLYTRRPHAFTWLKGFRFVTNSINSWTFLSGGENRYFLTHGEGTIYNGPFLGQDTEYGGTSSYIDISNNSSIYNLWTKNYEWIYPWTDPVNITKINFSITDNSNSSESIYGAERMNKPTVRTDFNFLLNRAGNGPTTYNDYNHILSYMLINGETFGQKRHGYSFAFTHSSVDRYNTIVPDKIVQIPAVKTNLVGANIIKGPGHTGGDLLKLEYERFLSLRIKLIASMTFRIRIRYASNISGQMMINIGYQNPTYFNIIPTTSRDYTELKFEDFQLVDTSYIYSGGPSISSNTLWLDNFSNGPVIIDKIEFIPLGITLNQAQGYDTYDQNANGMYHQNYSNSGYNYNQEYNTYYQSYNN</sequence>
<name>C19BA_BACUH</name>
<protein>
    <recommendedName>
        <fullName evidence="2">Pesticidal crystal protein Cry19Ba</fullName>
    </recommendedName>
    <alternativeName>
        <fullName>78 kDa crystal protein</fullName>
    </alternativeName>
    <alternativeName>
        <fullName>Crystaline entomocidal protoxin</fullName>
    </alternativeName>
    <alternativeName>
        <fullName>Insecticidal delta-endotoxin CryXIXB(a)</fullName>
    </alternativeName>
</protein>
<keyword id="KW-0614">Plasmid</keyword>
<keyword id="KW-0749">Sporulation</keyword>
<keyword id="KW-0800">Toxin</keyword>
<keyword id="KW-0843">Virulence</keyword>
<evidence type="ECO:0000269" key="1">
    <source>
    </source>
</evidence>
<evidence type="ECO:0000303" key="2">
    <source>
    </source>
</evidence>
<evidence type="ECO:0000305" key="3"/>
<evidence type="ECO:0000305" key="4">
    <source>
    </source>
</evidence>
<feature type="chain" id="PRO_0000174095" description="Pesticidal crystal protein Cry19Ba">
    <location>
        <begin position="1"/>
        <end position="682"/>
    </location>
</feature>
<dbReference type="EMBL" id="D88381">
    <property type="protein sequence ID" value="BAA32397.1"/>
    <property type="molecule type" value="Genomic_DNA"/>
</dbReference>
<dbReference type="SMR" id="O86170"/>
<dbReference type="GO" id="GO:0005102">
    <property type="term" value="F:signaling receptor binding"/>
    <property type="evidence" value="ECO:0007669"/>
    <property type="project" value="InterPro"/>
</dbReference>
<dbReference type="GO" id="GO:0090729">
    <property type="term" value="F:toxin activity"/>
    <property type="evidence" value="ECO:0007669"/>
    <property type="project" value="UniProtKB-KW"/>
</dbReference>
<dbReference type="GO" id="GO:0030435">
    <property type="term" value="P:sporulation resulting in formation of a cellular spore"/>
    <property type="evidence" value="ECO:0007669"/>
    <property type="project" value="UniProtKB-KW"/>
</dbReference>
<dbReference type="GO" id="GO:0001907">
    <property type="term" value="P:symbiont-mediated killing of host cell"/>
    <property type="evidence" value="ECO:0007669"/>
    <property type="project" value="InterPro"/>
</dbReference>
<dbReference type="CDD" id="cd04085">
    <property type="entry name" value="delta_endotoxin_C"/>
    <property type="match status" value="1"/>
</dbReference>
<dbReference type="Gene3D" id="2.60.120.260">
    <property type="entry name" value="Galactose-binding domain-like"/>
    <property type="match status" value="1"/>
</dbReference>
<dbReference type="Gene3D" id="2.100.10.10">
    <property type="entry name" value="Pesticidal crystal protein, central domain"/>
    <property type="match status" value="1"/>
</dbReference>
<dbReference type="Gene3D" id="1.20.190.10">
    <property type="entry name" value="Pesticidal crystal protein, N-terminal domain"/>
    <property type="match status" value="1"/>
</dbReference>
<dbReference type="InterPro" id="IPR008979">
    <property type="entry name" value="Galactose-bd-like_sf"/>
</dbReference>
<dbReference type="InterPro" id="IPR038979">
    <property type="entry name" value="Pest_crys"/>
</dbReference>
<dbReference type="InterPro" id="IPR005638">
    <property type="entry name" value="Pest_crys_dom-III"/>
</dbReference>
<dbReference type="InterPro" id="IPR005639">
    <property type="entry name" value="Pest_crys_dom_I"/>
</dbReference>
<dbReference type="InterPro" id="IPR036716">
    <property type="entry name" value="Pest_crys_N_sf"/>
</dbReference>
<dbReference type="InterPro" id="IPR036399">
    <property type="entry name" value="Pest_cryst_cen_dom_sf"/>
</dbReference>
<dbReference type="InterPro" id="IPR001178">
    <property type="entry name" value="Pest_cryst_dom_II"/>
</dbReference>
<dbReference type="PANTHER" id="PTHR37003">
    <property type="entry name" value="ENDOTOXIN_N DOMAIN-CONTAINING PROTEIN-RELATED"/>
    <property type="match status" value="1"/>
</dbReference>
<dbReference type="PANTHER" id="PTHR37003:SF2">
    <property type="entry name" value="PESTICIDAL CRYSTAL PROTEIN N-TERMINAL DOMAIN-CONTAINING PROTEIN"/>
    <property type="match status" value="1"/>
</dbReference>
<dbReference type="Pfam" id="PF03944">
    <property type="entry name" value="Endotoxin_C"/>
    <property type="match status" value="1"/>
</dbReference>
<dbReference type="Pfam" id="PF00555">
    <property type="entry name" value="Endotoxin_M"/>
    <property type="match status" value="1"/>
</dbReference>
<dbReference type="Pfam" id="PF03945">
    <property type="entry name" value="Endotoxin_N"/>
    <property type="match status" value="1"/>
</dbReference>
<dbReference type="SUPFAM" id="SSF51096">
    <property type="entry name" value="delta-Endotoxin (insectocide), middle domain"/>
    <property type="match status" value="1"/>
</dbReference>
<dbReference type="SUPFAM" id="SSF56849">
    <property type="entry name" value="delta-Endotoxin (insectocide), N-terminal domain"/>
    <property type="match status" value="1"/>
</dbReference>
<dbReference type="SUPFAM" id="SSF49785">
    <property type="entry name" value="Galactose-binding domain-like"/>
    <property type="match status" value="1"/>
</dbReference>